<organism>
    <name type="scientific">Chloroherpeton thalassium (strain ATCC 35110 / GB-78)</name>
    <dbReference type="NCBI Taxonomy" id="517418"/>
    <lineage>
        <taxon>Bacteria</taxon>
        <taxon>Pseudomonadati</taxon>
        <taxon>Chlorobiota</taxon>
        <taxon>Chlorobiia</taxon>
        <taxon>Chlorobiales</taxon>
        <taxon>Chloroherpetonaceae</taxon>
        <taxon>Chloroherpeton</taxon>
    </lineage>
</organism>
<proteinExistence type="inferred from homology"/>
<sequence length="199" mass="22562">MKKIALFGGSFDPPHYGHFALCTLTRELFSPEKIILSISKNPLKGSANAPEAHQLAMAKLMAEELGKTGPVFEVSDWELRRAGFSYTIETLRHFHAIEPNAELLLCIGEDNYQIFEKWKAYQEILQLAHLVVFARSGTQGEQQSSRIIPPERYTWVQLDLPLSSSDLRREIAEGQDWQAKMPSSIAAHIAAHRLYQNEK</sequence>
<comment type="function">
    <text evidence="1">Catalyzes the reversible adenylation of nicotinate mononucleotide (NaMN) to nicotinic acid adenine dinucleotide (NaAD).</text>
</comment>
<comment type="catalytic activity">
    <reaction evidence="1">
        <text>nicotinate beta-D-ribonucleotide + ATP + H(+) = deamido-NAD(+) + diphosphate</text>
        <dbReference type="Rhea" id="RHEA:22860"/>
        <dbReference type="ChEBI" id="CHEBI:15378"/>
        <dbReference type="ChEBI" id="CHEBI:30616"/>
        <dbReference type="ChEBI" id="CHEBI:33019"/>
        <dbReference type="ChEBI" id="CHEBI:57502"/>
        <dbReference type="ChEBI" id="CHEBI:58437"/>
        <dbReference type="EC" id="2.7.7.18"/>
    </reaction>
</comment>
<comment type="pathway">
    <text evidence="1">Cofactor biosynthesis; NAD(+) biosynthesis; deamido-NAD(+) from nicotinate D-ribonucleotide: step 1/1.</text>
</comment>
<comment type="similarity">
    <text evidence="1">Belongs to the NadD family.</text>
</comment>
<keyword id="KW-0067">ATP-binding</keyword>
<keyword id="KW-0520">NAD</keyword>
<keyword id="KW-0547">Nucleotide-binding</keyword>
<keyword id="KW-0548">Nucleotidyltransferase</keyword>
<keyword id="KW-0662">Pyridine nucleotide biosynthesis</keyword>
<keyword id="KW-1185">Reference proteome</keyword>
<keyword id="KW-0808">Transferase</keyword>
<gene>
    <name evidence="1" type="primary">nadD</name>
    <name type="ordered locus">Ctha_1225</name>
</gene>
<name>NADD_CHLT3</name>
<reference key="1">
    <citation type="submission" date="2008-06" db="EMBL/GenBank/DDBJ databases">
        <title>Complete sequence of Chloroherpeton thalassium ATCC 35110.</title>
        <authorList>
            <consortium name="US DOE Joint Genome Institute"/>
            <person name="Lucas S."/>
            <person name="Copeland A."/>
            <person name="Lapidus A."/>
            <person name="Glavina del Rio T."/>
            <person name="Dalin E."/>
            <person name="Tice H."/>
            <person name="Bruce D."/>
            <person name="Goodwin L."/>
            <person name="Pitluck S."/>
            <person name="Schmutz J."/>
            <person name="Larimer F."/>
            <person name="Land M."/>
            <person name="Hauser L."/>
            <person name="Kyrpides N."/>
            <person name="Mikhailova N."/>
            <person name="Liu Z."/>
            <person name="Li T."/>
            <person name="Zhao F."/>
            <person name="Overmann J."/>
            <person name="Bryant D.A."/>
            <person name="Richardson P."/>
        </authorList>
    </citation>
    <scope>NUCLEOTIDE SEQUENCE [LARGE SCALE GENOMIC DNA]</scope>
    <source>
        <strain>ATCC 35110 / GB-78</strain>
    </source>
</reference>
<feature type="chain" id="PRO_1000125345" description="Probable nicotinate-nucleotide adenylyltransferase">
    <location>
        <begin position="1"/>
        <end position="199"/>
    </location>
</feature>
<protein>
    <recommendedName>
        <fullName evidence="1">Probable nicotinate-nucleotide adenylyltransferase</fullName>
        <ecNumber evidence="1">2.7.7.18</ecNumber>
    </recommendedName>
    <alternativeName>
        <fullName evidence="1">Deamido-NAD(+) diphosphorylase</fullName>
    </alternativeName>
    <alternativeName>
        <fullName evidence="1">Deamido-NAD(+) pyrophosphorylase</fullName>
    </alternativeName>
    <alternativeName>
        <fullName evidence="1">Nicotinate mononucleotide adenylyltransferase</fullName>
        <shortName evidence="1">NaMN adenylyltransferase</shortName>
    </alternativeName>
</protein>
<dbReference type="EC" id="2.7.7.18" evidence="1"/>
<dbReference type="EMBL" id="CP001100">
    <property type="protein sequence ID" value="ACF13688.1"/>
    <property type="molecule type" value="Genomic_DNA"/>
</dbReference>
<dbReference type="RefSeq" id="WP_012499772.1">
    <property type="nucleotide sequence ID" value="NC_011026.1"/>
</dbReference>
<dbReference type="SMR" id="B3QYZ5"/>
<dbReference type="STRING" id="517418.Ctha_1225"/>
<dbReference type="KEGG" id="cts:Ctha_1225"/>
<dbReference type="eggNOG" id="COG1057">
    <property type="taxonomic scope" value="Bacteria"/>
</dbReference>
<dbReference type="HOGENOM" id="CLU_069765_3_2_10"/>
<dbReference type="OrthoDB" id="5295945at2"/>
<dbReference type="UniPathway" id="UPA00253">
    <property type="reaction ID" value="UER00332"/>
</dbReference>
<dbReference type="Proteomes" id="UP000001208">
    <property type="component" value="Chromosome"/>
</dbReference>
<dbReference type="GO" id="GO:0005524">
    <property type="term" value="F:ATP binding"/>
    <property type="evidence" value="ECO:0007669"/>
    <property type="project" value="UniProtKB-KW"/>
</dbReference>
<dbReference type="GO" id="GO:0004515">
    <property type="term" value="F:nicotinate-nucleotide adenylyltransferase activity"/>
    <property type="evidence" value="ECO:0007669"/>
    <property type="project" value="UniProtKB-UniRule"/>
</dbReference>
<dbReference type="GO" id="GO:0009435">
    <property type="term" value="P:NAD biosynthetic process"/>
    <property type="evidence" value="ECO:0007669"/>
    <property type="project" value="UniProtKB-UniRule"/>
</dbReference>
<dbReference type="CDD" id="cd02165">
    <property type="entry name" value="NMNAT"/>
    <property type="match status" value="1"/>
</dbReference>
<dbReference type="Gene3D" id="3.40.50.620">
    <property type="entry name" value="HUPs"/>
    <property type="match status" value="1"/>
</dbReference>
<dbReference type="HAMAP" id="MF_00244">
    <property type="entry name" value="NaMN_adenylyltr"/>
    <property type="match status" value="1"/>
</dbReference>
<dbReference type="InterPro" id="IPR004821">
    <property type="entry name" value="Cyt_trans-like"/>
</dbReference>
<dbReference type="InterPro" id="IPR005248">
    <property type="entry name" value="NadD/NMNAT"/>
</dbReference>
<dbReference type="InterPro" id="IPR014729">
    <property type="entry name" value="Rossmann-like_a/b/a_fold"/>
</dbReference>
<dbReference type="NCBIfam" id="TIGR00125">
    <property type="entry name" value="cyt_tran_rel"/>
    <property type="match status" value="1"/>
</dbReference>
<dbReference type="NCBIfam" id="TIGR00482">
    <property type="entry name" value="nicotinate (nicotinamide) nucleotide adenylyltransferase"/>
    <property type="match status" value="1"/>
</dbReference>
<dbReference type="PANTHER" id="PTHR39321">
    <property type="entry name" value="NICOTINATE-NUCLEOTIDE ADENYLYLTRANSFERASE-RELATED"/>
    <property type="match status" value="1"/>
</dbReference>
<dbReference type="PANTHER" id="PTHR39321:SF3">
    <property type="entry name" value="PHOSPHOPANTETHEINE ADENYLYLTRANSFERASE"/>
    <property type="match status" value="1"/>
</dbReference>
<dbReference type="Pfam" id="PF01467">
    <property type="entry name" value="CTP_transf_like"/>
    <property type="match status" value="1"/>
</dbReference>
<dbReference type="SUPFAM" id="SSF52374">
    <property type="entry name" value="Nucleotidylyl transferase"/>
    <property type="match status" value="1"/>
</dbReference>
<accession>B3QYZ5</accession>
<evidence type="ECO:0000255" key="1">
    <source>
        <dbReference type="HAMAP-Rule" id="MF_00244"/>
    </source>
</evidence>